<reference key="1">
    <citation type="submission" date="2007-04" db="EMBL/GenBank/DDBJ databases">
        <title>The complete genome sequence of Mycobacterium tuberculosis F11.</title>
        <authorList>
            <person name="Birren B."/>
            <person name="Lander E."/>
            <person name="Galagan J."/>
            <person name="Devon K."/>
            <person name="Nusbaum C."/>
            <person name="Borowsky M.L."/>
            <person name="Grabherr M."/>
            <person name="Mauceli E."/>
            <person name="Brockman W."/>
            <person name="Young S."/>
            <person name="LaButti K."/>
            <person name="Pushparaj V."/>
            <person name="Sykes S."/>
            <person name="Baldwin J."/>
            <person name="Fitzgerald M."/>
            <person name="Bloom T."/>
            <person name="Zimmer A."/>
            <person name="Settipalli S."/>
            <person name="Shea T."/>
            <person name="Arachchi H."/>
            <person name="Macdonald P."/>
            <person name="Abouelleil A."/>
            <person name="Lui A."/>
            <person name="Priest M."/>
            <person name="Berlin A."/>
            <person name="Gearin G."/>
            <person name="Brown A."/>
            <person name="Aftuck L."/>
            <person name="Bessette D."/>
            <person name="Allen N."/>
            <person name="Lubonja R."/>
            <person name="Lokyitsang T."/>
            <person name="Matthews C."/>
            <person name="Dunbar C."/>
            <person name="Benamara M."/>
            <person name="Nguyen T."/>
            <person name="Negash T."/>
            <person name="DeCaprio D."/>
            <person name="Crawford M."/>
            <person name="Koehrsen M."/>
            <person name="Engels R."/>
            <person name="Montgomery P."/>
            <person name="Pearson M."/>
            <person name="Howarth C."/>
            <person name="Kodira C."/>
            <person name="Zeng Q."/>
            <person name="Yandava C."/>
            <person name="O'Leary S."/>
            <person name="Alvarado L."/>
            <person name="Victor T."/>
            <person name="Murray M."/>
        </authorList>
    </citation>
    <scope>NUCLEOTIDE SEQUENCE [LARGE SCALE GENOMIC DNA]</scope>
    <source>
        <strain>F11</strain>
    </source>
</reference>
<proteinExistence type="inferred from homology"/>
<gene>
    <name type="primary">lysX</name>
    <name type="ordered locus">TBFG_11657</name>
</gene>
<accession>A5WMW1</accession>
<dbReference type="EC" id="6.1.1.6"/>
<dbReference type="EC" id="2.3.2.3"/>
<dbReference type="EMBL" id="CP000717">
    <property type="protein sequence ID" value="ABR06000.1"/>
    <property type="molecule type" value="Genomic_DNA"/>
</dbReference>
<dbReference type="SMR" id="A5WMW1"/>
<dbReference type="KEGG" id="mtf:TBFG_11657"/>
<dbReference type="PATRIC" id="fig|336982.11.peg.1810"/>
<dbReference type="HOGENOM" id="CLU_008255_2_0_11"/>
<dbReference type="GO" id="GO:0005829">
    <property type="term" value="C:cytosol"/>
    <property type="evidence" value="ECO:0007669"/>
    <property type="project" value="TreeGrafter"/>
</dbReference>
<dbReference type="GO" id="GO:0005886">
    <property type="term" value="C:plasma membrane"/>
    <property type="evidence" value="ECO:0007669"/>
    <property type="project" value="UniProtKB-SubCell"/>
</dbReference>
<dbReference type="GO" id="GO:0005524">
    <property type="term" value="F:ATP binding"/>
    <property type="evidence" value="ECO:0007669"/>
    <property type="project" value="UniProtKB-UniRule"/>
</dbReference>
<dbReference type="GO" id="GO:0003677">
    <property type="term" value="F:DNA binding"/>
    <property type="evidence" value="ECO:0007669"/>
    <property type="project" value="UniProtKB-KW"/>
</dbReference>
<dbReference type="GO" id="GO:0004824">
    <property type="term" value="F:lysine-tRNA ligase activity"/>
    <property type="evidence" value="ECO:0007669"/>
    <property type="project" value="UniProtKB-UniRule"/>
</dbReference>
<dbReference type="GO" id="GO:0000287">
    <property type="term" value="F:magnesium ion binding"/>
    <property type="evidence" value="ECO:0007669"/>
    <property type="project" value="UniProtKB-UniRule"/>
</dbReference>
<dbReference type="GO" id="GO:0050071">
    <property type="term" value="F:phosphatidylglycerol lysyltransferase activity"/>
    <property type="evidence" value="ECO:0007669"/>
    <property type="project" value="UniProtKB-EC"/>
</dbReference>
<dbReference type="GO" id="GO:0000049">
    <property type="term" value="F:tRNA binding"/>
    <property type="evidence" value="ECO:0007669"/>
    <property type="project" value="TreeGrafter"/>
</dbReference>
<dbReference type="GO" id="GO:0006629">
    <property type="term" value="P:lipid metabolic process"/>
    <property type="evidence" value="ECO:0007669"/>
    <property type="project" value="UniProtKB-KW"/>
</dbReference>
<dbReference type="GO" id="GO:0006430">
    <property type="term" value="P:lysyl-tRNA aminoacylation"/>
    <property type="evidence" value="ECO:0007669"/>
    <property type="project" value="UniProtKB-UniRule"/>
</dbReference>
<dbReference type="GO" id="GO:0046677">
    <property type="term" value="P:response to antibiotic"/>
    <property type="evidence" value="ECO:0007669"/>
    <property type="project" value="UniProtKB-KW"/>
</dbReference>
<dbReference type="CDD" id="cd04322">
    <property type="entry name" value="LysRS_N"/>
    <property type="match status" value="1"/>
</dbReference>
<dbReference type="FunFam" id="2.40.50.140:FF:000404">
    <property type="entry name" value="Lysylphosphatidylglycerol biosynthesis bifunctional protein LysX"/>
    <property type="match status" value="1"/>
</dbReference>
<dbReference type="Gene3D" id="3.30.930.10">
    <property type="entry name" value="Bira Bifunctional Protein, Domain 2"/>
    <property type="match status" value="1"/>
</dbReference>
<dbReference type="Gene3D" id="2.40.50.140">
    <property type="entry name" value="Nucleic acid-binding proteins"/>
    <property type="match status" value="1"/>
</dbReference>
<dbReference type="HAMAP" id="MF_00252">
    <property type="entry name" value="Lys_tRNA_synth_class2"/>
    <property type="match status" value="1"/>
</dbReference>
<dbReference type="InterPro" id="IPR004364">
    <property type="entry name" value="Aa-tRNA-synt_II"/>
</dbReference>
<dbReference type="InterPro" id="IPR006195">
    <property type="entry name" value="aa-tRNA-synth_II"/>
</dbReference>
<dbReference type="InterPro" id="IPR045864">
    <property type="entry name" value="aa-tRNA-synth_II/BPL/LPL"/>
</dbReference>
<dbReference type="InterPro" id="IPR024320">
    <property type="entry name" value="LPG_synthase_C"/>
</dbReference>
<dbReference type="InterPro" id="IPR002313">
    <property type="entry name" value="Lys-tRNA-ligase_II"/>
</dbReference>
<dbReference type="InterPro" id="IPR044136">
    <property type="entry name" value="Lys-tRNA-ligase_II_N"/>
</dbReference>
<dbReference type="InterPro" id="IPR018149">
    <property type="entry name" value="Lys-tRNA-synth_II_C"/>
</dbReference>
<dbReference type="InterPro" id="IPR012340">
    <property type="entry name" value="NA-bd_OB-fold"/>
</dbReference>
<dbReference type="InterPro" id="IPR004365">
    <property type="entry name" value="NA-bd_OB_tRNA"/>
</dbReference>
<dbReference type="InterPro" id="IPR031553">
    <property type="entry name" value="tRNA-synt_2_TM"/>
</dbReference>
<dbReference type="NCBIfam" id="TIGR00499">
    <property type="entry name" value="lysS_bact"/>
    <property type="match status" value="1"/>
</dbReference>
<dbReference type="NCBIfam" id="NF001756">
    <property type="entry name" value="PRK00484.1"/>
    <property type="match status" value="1"/>
</dbReference>
<dbReference type="NCBIfam" id="NF002821">
    <property type="entry name" value="PRK02983.1"/>
    <property type="match status" value="1"/>
</dbReference>
<dbReference type="PANTHER" id="PTHR42918:SF15">
    <property type="entry name" value="LYSINE--TRNA LIGASE, CHLOROPLASTIC_MITOCHONDRIAL"/>
    <property type="match status" value="1"/>
</dbReference>
<dbReference type="PANTHER" id="PTHR42918">
    <property type="entry name" value="LYSYL-TRNA SYNTHETASE"/>
    <property type="match status" value="1"/>
</dbReference>
<dbReference type="Pfam" id="PF09924">
    <property type="entry name" value="LPG_synthase_C"/>
    <property type="match status" value="1"/>
</dbReference>
<dbReference type="Pfam" id="PF00152">
    <property type="entry name" value="tRNA-synt_2"/>
    <property type="match status" value="1"/>
</dbReference>
<dbReference type="Pfam" id="PF16995">
    <property type="entry name" value="tRNA-synt_2_TM"/>
    <property type="match status" value="1"/>
</dbReference>
<dbReference type="Pfam" id="PF01336">
    <property type="entry name" value="tRNA_anti-codon"/>
    <property type="match status" value="1"/>
</dbReference>
<dbReference type="PRINTS" id="PR00982">
    <property type="entry name" value="TRNASYNTHLYS"/>
</dbReference>
<dbReference type="SUPFAM" id="SSF55681">
    <property type="entry name" value="Class II aaRS and biotin synthetases"/>
    <property type="match status" value="1"/>
</dbReference>
<dbReference type="SUPFAM" id="SSF50249">
    <property type="entry name" value="Nucleic acid-binding proteins"/>
    <property type="match status" value="1"/>
</dbReference>
<dbReference type="PROSITE" id="PS50862">
    <property type="entry name" value="AA_TRNA_LIGASE_II"/>
    <property type="match status" value="1"/>
</dbReference>
<keyword id="KW-0030">Aminoacyl-tRNA synthetase</keyword>
<keyword id="KW-0046">Antibiotic resistance</keyword>
<keyword id="KW-0067">ATP-binding</keyword>
<keyword id="KW-1003">Cell membrane</keyword>
<keyword id="KW-0238">DNA-binding</keyword>
<keyword id="KW-0436">Ligase</keyword>
<keyword id="KW-0443">Lipid metabolism</keyword>
<keyword id="KW-0460">Magnesium</keyword>
<keyword id="KW-0472">Membrane</keyword>
<keyword id="KW-0479">Metal-binding</keyword>
<keyword id="KW-0511">Multifunctional enzyme</keyword>
<keyword id="KW-0547">Nucleotide-binding</keyword>
<keyword id="KW-0808">Transferase</keyword>
<keyword id="KW-0812">Transmembrane</keyword>
<keyword id="KW-1133">Transmembrane helix</keyword>
<keyword id="KW-0843">Virulence</keyword>
<sequence length="1172" mass="128240">MGLHLTVPGLRRDGRGVQSNSHDTSSKTTADISRCPQHTDAGLQRAATPGISRLLGISSRSVTLTKPRSATRGNSRYHWVPAAAGWTVGVIATLSLLASVSPLIRWIIKVPREFINDYLFNFPDTNFAWSFVLALLAAALTARKRIAWLVLLANMVLAAVVNAAEIAAGGNTAAESFGENLGFAVHVVAIVVLVLGYREFWAKVRRGALFRAAAVWLAGAVVGIVASWGLVELFPGSLAPDERLGYAANRVVGFALADPDLFTGRPHVFLNAIFGLFGAFALIGAAIVLFLSQRADNALTGEDESAIRGLLDLYGKDDSLGYFATRRDKSVVFASSGRACITYRVEVGVCLASGDPVGDHRAWPQAVDAWLRLCQTYGWAPGVMGASSQGAQTYREAGLTALELGDEAILRPADFKLSGPEMRGVRQAVTRARRAGLTVRIRRHRDIAEDEMAQTITRADSWRDTETERGFSMALGRLGDPADSDCLLVEAIDPHNQVLAMLSLVPWGTTGVSLDLMRRSPQSPNGTIELMVSELALHAESLGITRISLNFAVFRAAFEQGAQLGAGPVARLWRGLLVFFSRWWQLETLYRSNMKYQPEWVPRYACYEDARVIPRVGVASVIAEGFLVLPFSRRNRVHTGHHPAVPERLAATGLLHHDGSAPDVSGLRQVGLTNGDGVERRLPEQVRVRFDKLEKLRSSGIDAFPVGRPPSHTVAQALAADHQASVSVSGRIMRIRNYGGVLFAQLRDWSGEMQVLLDNSRLDQGCAADFNAATDLGDLVEMTGHMGASKTGTPSLIVSGWRLIGKCLRPLPNKWKGLLDPEARVRTRYLDLAVNAESRALITARSSVLRAVRETLFAKGFVEVETPILQQLHGGATARPFVTHINTYSMDLFLRIAPELYLKRLCVGGVERVFELGRAFRNEGVDFSHNPEFTLLEAYQAHADYLEWIDGCRELIQNAAQAANGAPIAMRPRTDKGSDGTRHHLEPVDISGIWPVRTVHDAISEALGERIDADTGLTTLRKLCDAAGVPYRTQWDAGAVVLELYEHLVECRTEQPTFYIDFPTSVSPLTRPHRSKRGVAERWDLVAWGIELGTAYSELTDPVEQRRRLQEQSLLAAGGDPEAMELDEDFLQAMEYAMPPTGGLGMGIDRVVMLITGRSIRETLPFPLAKPH</sequence>
<feature type="chain" id="PRO_0000394329" description="Lysylphosphatidylglycerol biosynthesis bifunctional protein LysX">
    <location>
        <begin position="1"/>
        <end position="1172"/>
    </location>
</feature>
<feature type="transmembrane region" description="Helical" evidence="2">
    <location>
        <begin position="80"/>
        <end position="100"/>
    </location>
</feature>
<feature type="transmembrane region" description="Helical" evidence="2">
    <location>
        <begin position="122"/>
        <end position="142"/>
    </location>
</feature>
<feature type="transmembrane region" description="Helical" evidence="2">
    <location>
        <begin position="146"/>
        <end position="166"/>
    </location>
</feature>
<feature type="transmembrane region" description="Helical" evidence="2">
    <location>
        <begin position="177"/>
        <end position="197"/>
    </location>
</feature>
<feature type="transmembrane region" description="Helical" evidence="2">
    <location>
        <begin position="214"/>
        <end position="234"/>
    </location>
</feature>
<feature type="transmembrane region" description="Helical" evidence="2">
    <location>
        <begin position="272"/>
        <end position="292"/>
    </location>
</feature>
<feature type="transmembrane region" description="Helical" evidence="2">
    <location>
        <begin position="612"/>
        <end position="632"/>
    </location>
</feature>
<feature type="DNA-binding region" description="OB">
    <location>
        <begin position="726"/>
        <end position="804"/>
    </location>
</feature>
<feature type="region of interest" description="Phosphatidylglycerol lysyltransferase">
    <location>
        <begin position="1"/>
        <end position="663"/>
    </location>
</feature>
<feature type="region of interest" description="Disordered" evidence="3">
    <location>
        <begin position="1"/>
        <end position="34"/>
    </location>
</feature>
<feature type="region of interest" description="Lysine--tRNA ligase">
    <location>
        <begin position="664"/>
        <end position="1172"/>
    </location>
</feature>
<feature type="compositionally biased region" description="Polar residues" evidence="3">
    <location>
        <begin position="17"/>
        <end position="31"/>
    </location>
</feature>
<feature type="binding site" evidence="1">
    <location>
        <position position="1084"/>
    </location>
    <ligand>
        <name>Mg(2+)</name>
        <dbReference type="ChEBI" id="CHEBI:18420"/>
        <label>1</label>
    </ligand>
</feature>
<feature type="binding site" evidence="1">
    <location>
        <position position="1091"/>
    </location>
    <ligand>
        <name>Mg(2+)</name>
        <dbReference type="ChEBI" id="CHEBI:18420"/>
        <label>1</label>
    </ligand>
</feature>
<feature type="binding site" evidence="1">
    <location>
        <position position="1091"/>
    </location>
    <ligand>
        <name>Mg(2+)</name>
        <dbReference type="ChEBI" id="CHEBI:18420"/>
        <label>2</label>
    </ligand>
</feature>
<organism>
    <name type="scientific">Mycobacterium tuberculosis (strain F11)</name>
    <dbReference type="NCBI Taxonomy" id="336982"/>
    <lineage>
        <taxon>Bacteria</taxon>
        <taxon>Bacillati</taxon>
        <taxon>Actinomycetota</taxon>
        <taxon>Actinomycetes</taxon>
        <taxon>Mycobacteriales</taxon>
        <taxon>Mycobacteriaceae</taxon>
        <taxon>Mycobacterium</taxon>
        <taxon>Mycobacterium tuberculosis complex</taxon>
    </lineage>
</organism>
<name>LYSX_MYCTF</name>
<protein>
    <recommendedName>
        <fullName>Lysylphosphatidylglycerol biosynthesis bifunctional protein LysX</fullName>
    </recommendedName>
    <domain>
        <recommendedName>
            <fullName>Lysine--tRNA ligase</fullName>
            <ecNumber>6.1.1.6</ecNumber>
        </recommendedName>
        <alternativeName>
            <fullName>Lysyl-tRNA synthetase</fullName>
            <shortName>LysRS</shortName>
        </alternativeName>
    </domain>
    <domain>
        <recommendedName>
            <fullName>Phosphatidylglycerol lysyltransferase</fullName>
            <ecNumber>2.3.2.3</ecNumber>
        </recommendedName>
        <alternativeName>
            <fullName>Lysylphosphatidylglycerol synthetase</fullName>
            <shortName>LPG synthetase</shortName>
        </alternativeName>
    </domain>
</protein>
<evidence type="ECO:0000250" key="1"/>
<evidence type="ECO:0000255" key="2"/>
<evidence type="ECO:0000256" key="3">
    <source>
        <dbReference type="SAM" id="MobiDB-lite"/>
    </source>
</evidence>
<evidence type="ECO:0000305" key="4"/>
<comment type="function">
    <text evidence="1">Catalyzes the production of L-lysyl-tRNA(Lys)transfer and the transfer of a lysyl group from L-lysyl-tRNA(Lys) to membrane-bound phosphatidylglycerol (PG), which produces lysylphosphatidylglycerol (LPG), one of the components of the bacterial membrane with a positive net charge. LPG synthesis contributes to the resistance to cationic antimicrobial peptides (CAMPs) and likely protects M.tuberculosis against the CAMPs produced by competiting microorganisms (bacteriocins). In fact, the modification of anionic phosphatidylglycerol with positively charged L-lysine results in repulsion of the peptides (By similarity).</text>
</comment>
<comment type="catalytic activity">
    <reaction>
        <text>tRNA(Lys) + L-lysine + ATP = L-lysyl-tRNA(Lys) + AMP + diphosphate</text>
        <dbReference type="Rhea" id="RHEA:20792"/>
        <dbReference type="Rhea" id="RHEA-COMP:9696"/>
        <dbReference type="Rhea" id="RHEA-COMP:9697"/>
        <dbReference type="ChEBI" id="CHEBI:30616"/>
        <dbReference type="ChEBI" id="CHEBI:32551"/>
        <dbReference type="ChEBI" id="CHEBI:33019"/>
        <dbReference type="ChEBI" id="CHEBI:78442"/>
        <dbReference type="ChEBI" id="CHEBI:78529"/>
        <dbReference type="ChEBI" id="CHEBI:456215"/>
        <dbReference type="EC" id="6.1.1.6"/>
    </reaction>
</comment>
<comment type="catalytic activity">
    <reaction>
        <text>L-lysyl-tRNA(Lys) + a 1,2-diacyl-sn-glycero-3-phospho-(1'-sn-glycerol) = a 1,2-diacyl-sn-glycero-3-phospho-1'-(3'-O-L-lysyl)-sn-glycerol + tRNA(Lys)</text>
        <dbReference type="Rhea" id="RHEA:10668"/>
        <dbReference type="Rhea" id="RHEA-COMP:9696"/>
        <dbReference type="Rhea" id="RHEA-COMP:9697"/>
        <dbReference type="ChEBI" id="CHEBI:64716"/>
        <dbReference type="ChEBI" id="CHEBI:75792"/>
        <dbReference type="ChEBI" id="CHEBI:78442"/>
        <dbReference type="ChEBI" id="CHEBI:78529"/>
        <dbReference type="EC" id="2.3.2.3"/>
    </reaction>
</comment>
<comment type="cofactor">
    <cofactor evidence="1">
        <name>Mg(2+)</name>
        <dbReference type="ChEBI" id="CHEBI:18420"/>
    </cofactor>
    <text evidence="1">Binds 3 Mg(2+) ions per subunit.</text>
</comment>
<comment type="subcellular location">
    <subcellularLocation>
        <location evidence="4">Cell membrane</location>
        <topology evidence="4">Multi-pass membrane protein</topology>
    </subcellularLocation>
</comment>
<comment type="similarity">
    <text evidence="4">In the N-terminal section; belongs to the LPG synthetase family.</text>
</comment>
<comment type="similarity">
    <text evidence="4">In the C-terminal section; belongs to the class-II aminoacyl-tRNA synthetase family.</text>
</comment>